<evidence type="ECO:0000255" key="1">
    <source>
        <dbReference type="HAMAP-Rule" id="MF_01227"/>
    </source>
</evidence>
<comment type="function">
    <text evidence="1">Catalyzes the ATP-dependent amination of UTP to CTP with either L-glutamine or ammonia as the source of nitrogen. Regulates intracellular CTP levels through interactions with the four ribonucleotide triphosphates.</text>
</comment>
<comment type="catalytic activity">
    <reaction evidence="1">
        <text>UTP + L-glutamine + ATP + H2O = CTP + L-glutamate + ADP + phosphate + 2 H(+)</text>
        <dbReference type="Rhea" id="RHEA:26426"/>
        <dbReference type="ChEBI" id="CHEBI:15377"/>
        <dbReference type="ChEBI" id="CHEBI:15378"/>
        <dbReference type="ChEBI" id="CHEBI:29985"/>
        <dbReference type="ChEBI" id="CHEBI:30616"/>
        <dbReference type="ChEBI" id="CHEBI:37563"/>
        <dbReference type="ChEBI" id="CHEBI:43474"/>
        <dbReference type="ChEBI" id="CHEBI:46398"/>
        <dbReference type="ChEBI" id="CHEBI:58359"/>
        <dbReference type="ChEBI" id="CHEBI:456216"/>
        <dbReference type="EC" id="6.3.4.2"/>
    </reaction>
</comment>
<comment type="catalytic activity">
    <reaction evidence="1">
        <text>L-glutamine + H2O = L-glutamate + NH4(+)</text>
        <dbReference type="Rhea" id="RHEA:15889"/>
        <dbReference type="ChEBI" id="CHEBI:15377"/>
        <dbReference type="ChEBI" id="CHEBI:28938"/>
        <dbReference type="ChEBI" id="CHEBI:29985"/>
        <dbReference type="ChEBI" id="CHEBI:58359"/>
    </reaction>
</comment>
<comment type="catalytic activity">
    <reaction evidence="1">
        <text>UTP + NH4(+) + ATP = CTP + ADP + phosphate + 2 H(+)</text>
        <dbReference type="Rhea" id="RHEA:16597"/>
        <dbReference type="ChEBI" id="CHEBI:15378"/>
        <dbReference type="ChEBI" id="CHEBI:28938"/>
        <dbReference type="ChEBI" id="CHEBI:30616"/>
        <dbReference type="ChEBI" id="CHEBI:37563"/>
        <dbReference type="ChEBI" id="CHEBI:43474"/>
        <dbReference type="ChEBI" id="CHEBI:46398"/>
        <dbReference type="ChEBI" id="CHEBI:456216"/>
    </reaction>
</comment>
<comment type="activity regulation">
    <text evidence="1">Allosterically activated by GTP, when glutamine is the substrate; GTP has no effect on the reaction when ammonia is the substrate. The allosteric effector GTP functions by stabilizing the protein conformation that binds the tetrahedral intermediate(s) formed during glutamine hydrolysis. Inhibited by the product CTP, via allosteric rather than competitive inhibition.</text>
</comment>
<comment type="pathway">
    <text evidence="1">Pyrimidine metabolism; CTP biosynthesis via de novo pathway; CTP from UDP: step 2/2.</text>
</comment>
<comment type="subunit">
    <text evidence="1">Homotetramer.</text>
</comment>
<comment type="miscellaneous">
    <text evidence="1">CTPSs have evolved a hybrid strategy for distinguishing between UTP and CTP. The overlapping regions of the product feedback inhibitory and substrate sites recognize a common feature in both compounds, the triphosphate moiety. To differentiate isosteric substrate and product pyrimidine rings, an additional pocket far from the expected kinase/ligase catalytic site, specifically recognizes the cytosine and ribose portions of the product inhibitor.</text>
</comment>
<comment type="similarity">
    <text evidence="1">Belongs to the CTP synthase family.</text>
</comment>
<name>PYRG_CHLCV</name>
<sequence>MPFKCIFLTGGVVSSLGKGLTAASLALLLERQNLKVAMLKLDPYLNVDPGTMNPYEHGEVYVTNDGIETDLDLGHYHRFSSVNLSKYSTATSGQIYARVIKREREGVYLGSTVQVIPHITNEIIEVILECAKENQPDVLIVEIGGTVGDIESLPFLEAIRQFRCEHAANCFSIHMTYVPYLKAAGEVKTKPTQHSVQSLRGIGIIPDAILCRSETPLSNEVKKKISLFCNVPDSAVFNVVDVEHSIYEMPLMLSREKISTFITEKLGLFTKQEDLSDWKILIERLRNPLPNKVRIGLVGKYVQHKDAYKSVFESITHAALSLNCAVDILPLDSEDPHFLEALEECDGCLVPGGFGIRGWEGKITAAKLCRERGIPYFGICLGMQVLVVEYARNVMDLEKANSTEMDQDTPHPVICMMDGQAALVATGGTMRLGAYPCTLSPGTKVYEAYGQSEIMERHRHRYEVNFDYIQQLKDHGLNIVGRCPQQGLCEIVETENHPWMVGVQFHPEFLSKLITPHPLFVGFIQAALLYSKNKSHV</sequence>
<dbReference type="EC" id="6.3.4.2" evidence="1"/>
<dbReference type="EMBL" id="AE015925">
    <property type="protein sequence ID" value="AAP05339.1"/>
    <property type="molecule type" value="Genomic_DNA"/>
</dbReference>
<dbReference type="RefSeq" id="WP_011006554.1">
    <property type="nucleotide sequence ID" value="NC_003361.3"/>
</dbReference>
<dbReference type="SMR" id="Q822T2"/>
<dbReference type="STRING" id="227941.CCA_00597"/>
<dbReference type="KEGG" id="cca:CCA_00597"/>
<dbReference type="eggNOG" id="COG0504">
    <property type="taxonomic scope" value="Bacteria"/>
</dbReference>
<dbReference type="HOGENOM" id="CLU_011675_5_0_0"/>
<dbReference type="OrthoDB" id="9801107at2"/>
<dbReference type="UniPathway" id="UPA00159">
    <property type="reaction ID" value="UER00277"/>
</dbReference>
<dbReference type="Proteomes" id="UP000002193">
    <property type="component" value="Chromosome"/>
</dbReference>
<dbReference type="GO" id="GO:0005829">
    <property type="term" value="C:cytosol"/>
    <property type="evidence" value="ECO:0007669"/>
    <property type="project" value="TreeGrafter"/>
</dbReference>
<dbReference type="GO" id="GO:0005524">
    <property type="term" value="F:ATP binding"/>
    <property type="evidence" value="ECO:0007669"/>
    <property type="project" value="UniProtKB-KW"/>
</dbReference>
<dbReference type="GO" id="GO:0003883">
    <property type="term" value="F:CTP synthase activity"/>
    <property type="evidence" value="ECO:0007669"/>
    <property type="project" value="UniProtKB-UniRule"/>
</dbReference>
<dbReference type="GO" id="GO:0004359">
    <property type="term" value="F:glutaminase activity"/>
    <property type="evidence" value="ECO:0007669"/>
    <property type="project" value="RHEA"/>
</dbReference>
<dbReference type="GO" id="GO:0042802">
    <property type="term" value="F:identical protein binding"/>
    <property type="evidence" value="ECO:0007669"/>
    <property type="project" value="TreeGrafter"/>
</dbReference>
<dbReference type="GO" id="GO:0046872">
    <property type="term" value="F:metal ion binding"/>
    <property type="evidence" value="ECO:0007669"/>
    <property type="project" value="UniProtKB-KW"/>
</dbReference>
<dbReference type="GO" id="GO:0044210">
    <property type="term" value="P:'de novo' CTP biosynthetic process"/>
    <property type="evidence" value="ECO:0007669"/>
    <property type="project" value="UniProtKB-UniRule"/>
</dbReference>
<dbReference type="GO" id="GO:0019856">
    <property type="term" value="P:pyrimidine nucleobase biosynthetic process"/>
    <property type="evidence" value="ECO:0007669"/>
    <property type="project" value="TreeGrafter"/>
</dbReference>
<dbReference type="CDD" id="cd03113">
    <property type="entry name" value="CTPS_N"/>
    <property type="match status" value="1"/>
</dbReference>
<dbReference type="CDD" id="cd01746">
    <property type="entry name" value="GATase1_CTP_Synthase"/>
    <property type="match status" value="1"/>
</dbReference>
<dbReference type="FunFam" id="3.40.50.300:FF:000009">
    <property type="entry name" value="CTP synthase"/>
    <property type="match status" value="1"/>
</dbReference>
<dbReference type="FunFam" id="3.40.50.880:FF:000002">
    <property type="entry name" value="CTP synthase"/>
    <property type="match status" value="1"/>
</dbReference>
<dbReference type="Gene3D" id="3.40.50.880">
    <property type="match status" value="1"/>
</dbReference>
<dbReference type="Gene3D" id="3.40.50.300">
    <property type="entry name" value="P-loop containing nucleotide triphosphate hydrolases"/>
    <property type="match status" value="1"/>
</dbReference>
<dbReference type="HAMAP" id="MF_01227">
    <property type="entry name" value="PyrG"/>
    <property type="match status" value="1"/>
</dbReference>
<dbReference type="InterPro" id="IPR029062">
    <property type="entry name" value="Class_I_gatase-like"/>
</dbReference>
<dbReference type="InterPro" id="IPR004468">
    <property type="entry name" value="CTP_synthase"/>
</dbReference>
<dbReference type="InterPro" id="IPR017456">
    <property type="entry name" value="CTP_synthase_N"/>
</dbReference>
<dbReference type="InterPro" id="IPR017926">
    <property type="entry name" value="GATASE"/>
</dbReference>
<dbReference type="InterPro" id="IPR033828">
    <property type="entry name" value="GATase1_CTP_Synthase"/>
</dbReference>
<dbReference type="InterPro" id="IPR027417">
    <property type="entry name" value="P-loop_NTPase"/>
</dbReference>
<dbReference type="NCBIfam" id="NF003792">
    <property type="entry name" value="PRK05380.1"/>
    <property type="match status" value="1"/>
</dbReference>
<dbReference type="NCBIfam" id="TIGR00337">
    <property type="entry name" value="PyrG"/>
    <property type="match status" value="1"/>
</dbReference>
<dbReference type="PANTHER" id="PTHR11550">
    <property type="entry name" value="CTP SYNTHASE"/>
    <property type="match status" value="1"/>
</dbReference>
<dbReference type="PANTHER" id="PTHR11550:SF0">
    <property type="entry name" value="CTP SYNTHASE-RELATED"/>
    <property type="match status" value="1"/>
</dbReference>
<dbReference type="Pfam" id="PF06418">
    <property type="entry name" value="CTP_synth_N"/>
    <property type="match status" value="1"/>
</dbReference>
<dbReference type="Pfam" id="PF00117">
    <property type="entry name" value="GATase"/>
    <property type="match status" value="1"/>
</dbReference>
<dbReference type="SUPFAM" id="SSF52317">
    <property type="entry name" value="Class I glutamine amidotransferase-like"/>
    <property type="match status" value="1"/>
</dbReference>
<dbReference type="SUPFAM" id="SSF52540">
    <property type="entry name" value="P-loop containing nucleoside triphosphate hydrolases"/>
    <property type="match status" value="1"/>
</dbReference>
<dbReference type="PROSITE" id="PS51273">
    <property type="entry name" value="GATASE_TYPE_1"/>
    <property type="match status" value="1"/>
</dbReference>
<proteinExistence type="inferred from homology"/>
<feature type="chain" id="PRO_0000138174" description="CTP synthase">
    <location>
        <begin position="1"/>
        <end position="537"/>
    </location>
</feature>
<feature type="domain" description="Glutamine amidotransferase type-1" evidence="1">
    <location>
        <begin position="294"/>
        <end position="533"/>
    </location>
</feature>
<feature type="region of interest" description="Amidoligase domain" evidence="1">
    <location>
        <begin position="1"/>
        <end position="268"/>
    </location>
</feature>
<feature type="active site" description="Nucleophile; for glutamine hydrolysis" evidence="1">
    <location>
        <position position="380"/>
    </location>
</feature>
<feature type="active site" evidence="1">
    <location>
        <position position="506"/>
    </location>
</feature>
<feature type="active site" evidence="1">
    <location>
        <position position="508"/>
    </location>
</feature>
<feature type="binding site" evidence="1">
    <location>
        <position position="14"/>
    </location>
    <ligand>
        <name>CTP</name>
        <dbReference type="ChEBI" id="CHEBI:37563"/>
        <note>allosteric inhibitor</note>
    </ligand>
</feature>
<feature type="binding site" evidence="1">
    <location>
        <position position="14"/>
    </location>
    <ligand>
        <name>UTP</name>
        <dbReference type="ChEBI" id="CHEBI:46398"/>
    </ligand>
</feature>
<feature type="binding site" evidence="1">
    <location>
        <begin position="15"/>
        <end position="20"/>
    </location>
    <ligand>
        <name>ATP</name>
        <dbReference type="ChEBI" id="CHEBI:30616"/>
    </ligand>
</feature>
<feature type="binding site" evidence="1">
    <location>
        <position position="55"/>
    </location>
    <ligand>
        <name>L-glutamine</name>
        <dbReference type="ChEBI" id="CHEBI:58359"/>
    </ligand>
</feature>
<feature type="binding site" evidence="1">
    <location>
        <position position="72"/>
    </location>
    <ligand>
        <name>ATP</name>
        <dbReference type="ChEBI" id="CHEBI:30616"/>
    </ligand>
</feature>
<feature type="binding site" evidence="1">
    <location>
        <position position="72"/>
    </location>
    <ligand>
        <name>Mg(2+)</name>
        <dbReference type="ChEBI" id="CHEBI:18420"/>
    </ligand>
</feature>
<feature type="binding site" evidence="1">
    <location>
        <position position="142"/>
    </location>
    <ligand>
        <name>Mg(2+)</name>
        <dbReference type="ChEBI" id="CHEBI:18420"/>
    </ligand>
</feature>
<feature type="binding site" evidence="1">
    <location>
        <begin position="149"/>
        <end position="151"/>
    </location>
    <ligand>
        <name>CTP</name>
        <dbReference type="ChEBI" id="CHEBI:37563"/>
        <note>allosteric inhibitor</note>
    </ligand>
</feature>
<feature type="binding site" evidence="1">
    <location>
        <begin position="188"/>
        <end position="193"/>
    </location>
    <ligand>
        <name>CTP</name>
        <dbReference type="ChEBI" id="CHEBI:37563"/>
        <note>allosteric inhibitor</note>
    </ligand>
</feature>
<feature type="binding site" evidence="1">
    <location>
        <begin position="188"/>
        <end position="193"/>
    </location>
    <ligand>
        <name>UTP</name>
        <dbReference type="ChEBI" id="CHEBI:46398"/>
    </ligand>
</feature>
<feature type="binding site" evidence="1">
    <location>
        <position position="224"/>
    </location>
    <ligand>
        <name>CTP</name>
        <dbReference type="ChEBI" id="CHEBI:37563"/>
        <note>allosteric inhibitor</note>
    </ligand>
</feature>
<feature type="binding site" evidence="1">
    <location>
        <position position="224"/>
    </location>
    <ligand>
        <name>UTP</name>
        <dbReference type="ChEBI" id="CHEBI:46398"/>
    </ligand>
</feature>
<feature type="binding site" evidence="1">
    <location>
        <position position="353"/>
    </location>
    <ligand>
        <name>L-glutamine</name>
        <dbReference type="ChEBI" id="CHEBI:58359"/>
    </ligand>
</feature>
<feature type="binding site" evidence="1">
    <location>
        <begin position="381"/>
        <end position="384"/>
    </location>
    <ligand>
        <name>L-glutamine</name>
        <dbReference type="ChEBI" id="CHEBI:58359"/>
    </ligand>
</feature>
<feature type="binding site" evidence="1">
    <location>
        <position position="404"/>
    </location>
    <ligand>
        <name>L-glutamine</name>
        <dbReference type="ChEBI" id="CHEBI:58359"/>
    </ligand>
</feature>
<feature type="binding site" evidence="1">
    <location>
        <position position="461"/>
    </location>
    <ligand>
        <name>L-glutamine</name>
        <dbReference type="ChEBI" id="CHEBI:58359"/>
    </ligand>
</feature>
<organism>
    <name type="scientific">Chlamydia caviae (strain ATCC VR-813 / DSM 19441 / 03DC25 / GPIC)</name>
    <name type="common">Chlamydophila caviae</name>
    <dbReference type="NCBI Taxonomy" id="227941"/>
    <lineage>
        <taxon>Bacteria</taxon>
        <taxon>Pseudomonadati</taxon>
        <taxon>Chlamydiota</taxon>
        <taxon>Chlamydiia</taxon>
        <taxon>Chlamydiales</taxon>
        <taxon>Chlamydiaceae</taxon>
        <taxon>Chlamydia/Chlamydophila group</taxon>
        <taxon>Chlamydia</taxon>
    </lineage>
</organism>
<gene>
    <name evidence="1" type="primary">pyrG</name>
    <name type="ordered locus">CCA_00597</name>
</gene>
<reference key="1">
    <citation type="journal article" date="2003" name="Nucleic Acids Res.">
        <title>Genome sequence of Chlamydophila caviae (Chlamydia psittaci GPIC): examining the role of niche-specific genes in the evolution of the Chlamydiaceae.</title>
        <authorList>
            <person name="Read T.D."/>
            <person name="Myers G.S.A."/>
            <person name="Brunham R.C."/>
            <person name="Nelson W.C."/>
            <person name="Paulsen I.T."/>
            <person name="Heidelberg J.F."/>
            <person name="Holtzapple E.K."/>
            <person name="Khouri H.M."/>
            <person name="Federova N.B."/>
            <person name="Carty H.A."/>
            <person name="Umayam L.A."/>
            <person name="Haft D.H."/>
            <person name="Peterson J.D."/>
            <person name="Beanan M.J."/>
            <person name="White O."/>
            <person name="Salzberg S.L."/>
            <person name="Hsia R.-C."/>
            <person name="McClarty G."/>
            <person name="Rank R.G."/>
            <person name="Bavoil P.M."/>
            <person name="Fraser C.M."/>
        </authorList>
    </citation>
    <scope>NUCLEOTIDE SEQUENCE [LARGE SCALE GENOMIC DNA]</scope>
    <source>
        <strain>ATCC VR-813 / DSM 19441 / 03DC25 / GPIC</strain>
    </source>
</reference>
<accession>Q822T2</accession>
<keyword id="KW-0067">ATP-binding</keyword>
<keyword id="KW-0315">Glutamine amidotransferase</keyword>
<keyword id="KW-0436">Ligase</keyword>
<keyword id="KW-0460">Magnesium</keyword>
<keyword id="KW-0479">Metal-binding</keyword>
<keyword id="KW-0547">Nucleotide-binding</keyword>
<keyword id="KW-0665">Pyrimidine biosynthesis</keyword>
<protein>
    <recommendedName>
        <fullName evidence="1">CTP synthase</fullName>
        <ecNumber evidence="1">6.3.4.2</ecNumber>
    </recommendedName>
    <alternativeName>
        <fullName evidence="1">Cytidine 5'-triphosphate synthase</fullName>
    </alternativeName>
    <alternativeName>
        <fullName evidence="1">Cytidine triphosphate synthetase</fullName>
        <shortName evidence="1">CTP synthetase</shortName>
        <shortName evidence="1">CTPS</shortName>
    </alternativeName>
    <alternativeName>
        <fullName evidence="1">UTP--ammonia ligase</fullName>
    </alternativeName>
</protein>